<name>P14_ASFM2</name>
<comment type="function">
    <text evidence="1">Structural protein required for transport of intracellular particles from the assembly sites to the plasma membrane (By similarity). Binds to both ssDNA and dsDNA (By similarity). Suppressed the activation of the cGAS/STING pathway by interfering with the recruitment of IRF3 to TBK1, which in turn suppresses IRF3 phosphorylation, decreasing interferon production (By similarity).</text>
</comment>
<comment type="subunit">
    <text evidence="1">Interacts with the major capsid protein (By similarity). Interacts with host IRF3; this interaction interferes with the recruitment of IRF3 to TBK1 (By similarity).</text>
</comment>
<comment type="subcellular location">
    <subcellularLocation>
        <location evidence="1">Virion</location>
    </subcellularLocation>
    <text evidence="1">Localizes at the surface of the intracellular virion.</text>
</comment>
<comment type="induction">
    <text evidence="3">Expressed in the late phase of the viral replicative cycle.</text>
</comment>
<comment type="PTM">
    <text evidence="1">Acetylated.</text>
</comment>
<comment type="similarity">
    <text evidence="3">Belongs to the asfivirus structural protein p14.5 family.</text>
</comment>
<accession>Q65245</accession>
<sequence>MADFNSPIQYLKEDSRDRTSIGSLEYDENADTMIPSFAAGLEEFEPIPDYDPTRSTSLYSQLTHNMERIAEEDDINFQHDTREFTSLVPEETDNKPEDDEESGAKPKKKKHLFPKLSSHKSK</sequence>
<proteinExistence type="inferred from homology"/>
<keyword id="KW-0007">Acetylation</keyword>
<keyword id="KW-0238">DNA-binding</keyword>
<keyword id="KW-0945">Host-virus interaction</keyword>
<keyword id="KW-1090">Inhibition of host innate immune response by virus</keyword>
<keyword id="KW-1092">Inhibition of host IRF3 by virus</keyword>
<keyword id="KW-1113">Inhibition of host RLR pathway by virus</keyword>
<keyword id="KW-0426">Late protein</keyword>
<keyword id="KW-0899">Viral immunoevasion</keyword>
<keyword id="KW-1188">Viral release from host cell</keyword>
<keyword id="KW-0946">Virion</keyword>
<evidence type="ECO:0000250" key="1">
    <source>
        <dbReference type="UniProtKB" id="Q65201"/>
    </source>
</evidence>
<evidence type="ECO:0000256" key="2">
    <source>
        <dbReference type="SAM" id="MobiDB-lite"/>
    </source>
</evidence>
<evidence type="ECO:0000305" key="3"/>
<feature type="initiator methionine" description="Removed" evidence="3">
    <location>
        <position position="1"/>
    </location>
</feature>
<feature type="chain" id="PRO_0000373398" description="Structural protein p14.5">
    <location>
        <begin position="2"/>
        <end position="122"/>
    </location>
</feature>
<feature type="region of interest" description="Disordered" evidence="2">
    <location>
        <begin position="1"/>
        <end position="27"/>
    </location>
</feature>
<feature type="region of interest" description="Disordered" evidence="2">
    <location>
        <begin position="85"/>
        <end position="122"/>
    </location>
</feature>
<feature type="compositionally biased region" description="Basic residues" evidence="2">
    <location>
        <begin position="105"/>
        <end position="122"/>
    </location>
</feature>
<feature type="modified residue" description="N-acetylalanine; by host" evidence="1">
    <location>
        <position position="2"/>
    </location>
</feature>
<reference key="1">
    <citation type="journal article" date="1994" name="J. Gen. Virol.">
        <title>Nucleotide sequence of a 55 kbp region from the right end of the genome of a pathogenic African swine fever virus isolate (Malawi LIL20/1).</title>
        <authorList>
            <person name="Dixon L.K."/>
            <person name="Twigg S.R.F."/>
            <person name="Baylis S.A."/>
            <person name="Vydelingum S."/>
            <person name="Bristow C."/>
            <person name="Hammond J.M."/>
            <person name="Smith G.L."/>
        </authorList>
    </citation>
    <scope>NUCLEOTIDE SEQUENCE [GENOMIC DNA]</scope>
</reference>
<reference key="2">
    <citation type="submission" date="2003-03" db="EMBL/GenBank/DDBJ databases">
        <title>African swine fever virus genomes.</title>
        <authorList>
            <person name="Kutish G.F."/>
            <person name="Rock D.L."/>
        </authorList>
    </citation>
    <scope>NUCLEOTIDE SEQUENCE [LARGE SCALE GENOMIC DNA]</scope>
</reference>
<gene>
    <name type="ordered locus">Mal-141</name>
    <name type="ORF">k3R</name>
</gene>
<protein>
    <recommendedName>
        <fullName>Structural protein p14.5</fullName>
    </recommendedName>
</protein>
<organism>
    <name type="scientific">African swine fever virus (isolate Tick/Malawi/Lil 20-1/1983)</name>
    <name type="common">ASFV</name>
    <dbReference type="NCBI Taxonomy" id="10500"/>
    <lineage>
        <taxon>Viruses</taxon>
        <taxon>Varidnaviria</taxon>
        <taxon>Bamfordvirae</taxon>
        <taxon>Nucleocytoviricota</taxon>
        <taxon>Pokkesviricetes</taxon>
        <taxon>Asfuvirales</taxon>
        <taxon>Asfarviridae</taxon>
        <taxon>Asfivirus</taxon>
        <taxon>African swine fever virus</taxon>
    </lineage>
</organism>
<organismHost>
    <name type="scientific">Ornithodoros</name>
    <name type="common">relapsing fever ticks</name>
    <dbReference type="NCBI Taxonomy" id="6937"/>
</organismHost>
<organismHost>
    <name type="scientific">Phacochoerus aethiopicus</name>
    <name type="common">Warthog</name>
    <dbReference type="NCBI Taxonomy" id="85517"/>
</organismHost>
<organismHost>
    <name type="scientific">Phacochoerus africanus</name>
    <name type="common">Warthog</name>
    <dbReference type="NCBI Taxonomy" id="41426"/>
</organismHost>
<organismHost>
    <name type="scientific">Potamochoerus larvatus</name>
    <name type="common">Bushpig</name>
    <dbReference type="NCBI Taxonomy" id="273792"/>
</organismHost>
<organismHost>
    <name type="scientific">Sus scrofa</name>
    <name type="common">Pig</name>
    <dbReference type="NCBI Taxonomy" id="9823"/>
</organismHost>
<dbReference type="EMBL" id="X71982">
    <property type="protein sequence ID" value="CAA50841.1"/>
    <property type="molecule type" value="Genomic_DNA"/>
</dbReference>
<dbReference type="EMBL" id="AY261361">
    <property type="status" value="NOT_ANNOTATED_CDS"/>
    <property type="molecule type" value="Genomic_DNA"/>
</dbReference>
<dbReference type="Proteomes" id="UP000000860">
    <property type="component" value="Segment"/>
</dbReference>
<dbReference type="GO" id="GO:0044423">
    <property type="term" value="C:virion component"/>
    <property type="evidence" value="ECO:0007669"/>
    <property type="project" value="UniProtKB-KW"/>
</dbReference>
<dbReference type="GO" id="GO:0003677">
    <property type="term" value="F:DNA binding"/>
    <property type="evidence" value="ECO:0007669"/>
    <property type="project" value="UniProtKB-KW"/>
</dbReference>
<dbReference type="GO" id="GO:0039548">
    <property type="term" value="P:symbiont-mediated suppression of host cytoplasmic pattern recognition receptor signaling pathway via inhibition of IRF3 activity"/>
    <property type="evidence" value="ECO:0007669"/>
    <property type="project" value="UniProtKB-KW"/>
</dbReference>